<comment type="function">
    <text evidence="1">Catalyzes the acyloin condensation reaction between C atoms 2 and 3 of pyruvate and glyceraldehyde 3-phosphate to yield 1-deoxy-D-xylulose-5-phosphate (DXP).</text>
</comment>
<comment type="catalytic activity">
    <reaction evidence="1">
        <text>D-glyceraldehyde 3-phosphate + pyruvate + H(+) = 1-deoxy-D-xylulose 5-phosphate + CO2</text>
        <dbReference type="Rhea" id="RHEA:12605"/>
        <dbReference type="ChEBI" id="CHEBI:15361"/>
        <dbReference type="ChEBI" id="CHEBI:15378"/>
        <dbReference type="ChEBI" id="CHEBI:16526"/>
        <dbReference type="ChEBI" id="CHEBI:57792"/>
        <dbReference type="ChEBI" id="CHEBI:59776"/>
        <dbReference type="EC" id="2.2.1.7"/>
    </reaction>
</comment>
<comment type="cofactor">
    <cofactor evidence="1">
        <name>Mg(2+)</name>
        <dbReference type="ChEBI" id="CHEBI:18420"/>
    </cofactor>
    <text evidence="1">Binds 1 Mg(2+) ion per subunit.</text>
</comment>
<comment type="cofactor">
    <cofactor evidence="1">
        <name>thiamine diphosphate</name>
        <dbReference type="ChEBI" id="CHEBI:58937"/>
    </cofactor>
    <text evidence="1">Binds 1 thiamine pyrophosphate per subunit.</text>
</comment>
<comment type="pathway">
    <text evidence="1">Metabolic intermediate biosynthesis; 1-deoxy-D-xylulose 5-phosphate biosynthesis; 1-deoxy-D-xylulose 5-phosphate from D-glyceraldehyde 3-phosphate and pyruvate: step 1/1.</text>
</comment>
<comment type="subunit">
    <text evidence="1">Homodimer.</text>
</comment>
<comment type="similarity">
    <text evidence="1">Belongs to the transketolase family. DXPS subfamily.</text>
</comment>
<accession>Q48NX0</accession>
<reference key="1">
    <citation type="journal article" date="2005" name="J. Bacteriol.">
        <title>Whole-genome sequence analysis of Pseudomonas syringae pv. phaseolicola 1448A reveals divergence among pathovars in genes involved in virulence and transposition.</title>
        <authorList>
            <person name="Joardar V."/>
            <person name="Lindeberg M."/>
            <person name="Jackson R.W."/>
            <person name="Selengut J."/>
            <person name="Dodson R."/>
            <person name="Brinkac L.M."/>
            <person name="Daugherty S.C."/>
            <person name="DeBoy R.T."/>
            <person name="Durkin A.S."/>
            <person name="Gwinn Giglio M."/>
            <person name="Madupu R."/>
            <person name="Nelson W.C."/>
            <person name="Rosovitz M.J."/>
            <person name="Sullivan S.A."/>
            <person name="Crabtree J."/>
            <person name="Creasy T."/>
            <person name="Davidsen T.M."/>
            <person name="Haft D.H."/>
            <person name="Zafar N."/>
            <person name="Zhou L."/>
            <person name="Halpin R."/>
            <person name="Holley T."/>
            <person name="Khouri H.M."/>
            <person name="Feldblyum T.V."/>
            <person name="White O."/>
            <person name="Fraser C.M."/>
            <person name="Chatterjee A.K."/>
            <person name="Cartinhour S."/>
            <person name="Schneider D."/>
            <person name="Mansfield J.W."/>
            <person name="Collmer A."/>
            <person name="Buell R."/>
        </authorList>
    </citation>
    <scope>NUCLEOTIDE SEQUENCE [LARGE SCALE GENOMIC DNA]</scope>
    <source>
        <strain>1448A / Race 6</strain>
    </source>
</reference>
<dbReference type="EC" id="2.2.1.7" evidence="1"/>
<dbReference type="EMBL" id="CP000058">
    <property type="protein sequence ID" value="AAZ35348.1"/>
    <property type="molecule type" value="Genomic_DNA"/>
</dbReference>
<dbReference type="RefSeq" id="WP_011167580.1">
    <property type="nucleotide sequence ID" value="NC_005773.3"/>
</dbReference>
<dbReference type="SMR" id="Q48NX0"/>
<dbReference type="KEGG" id="psp:PSPPH_0599"/>
<dbReference type="eggNOG" id="COG1154">
    <property type="taxonomic scope" value="Bacteria"/>
</dbReference>
<dbReference type="HOGENOM" id="CLU_009227_1_4_6"/>
<dbReference type="UniPathway" id="UPA00064">
    <property type="reaction ID" value="UER00091"/>
</dbReference>
<dbReference type="Proteomes" id="UP000000551">
    <property type="component" value="Chromosome"/>
</dbReference>
<dbReference type="GO" id="GO:0005829">
    <property type="term" value="C:cytosol"/>
    <property type="evidence" value="ECO:0007669"/>
    <property type="project" value="TreeGrafter"/>
</dbReference>
<dbReference type="GO" id="GO:0008661">
    <property type="term" value="F:1-deoxy-D-xylulose-5-phosphate synthase activity"/>
    <property type="evidence" value="ECO:0007669"/>
    <property type="project" value="UniProtKB-UniRule"/>
</dbReference>
<dbReference type="GO" id="GO:0000287">
    <property type="term" value="F:magnesium ion binding"/>
    <property type="evidence" value="ECO:0007669"/>
    <property type="project" value="UniProtKB-UniRule"/>
</dbReference>
<dbReference type="GO" id="GO:0030976">
    <property type="term" value="F:thiamine pyrophosphate binding"/>
    <property type="evidence" value="ECO:0007669"/>
    <property type="project" value="UniProtKB-UniRule"/>
</dbReference>
<dbReference type="GO" id="GO:0052865">
    <property type="term" value="P:1-deoxy-D-xylulose 5-phosphate biosynthetic process"/>
    <property type="evidence" value="ECO:0007669"/>
    <property type="project" value="UniProtKB-UniPathway"/>
</dbReference>
<dbReference type="GO" id="GO:0019288">
    <property type="term" value="P:isopentenyl diphosphate biosynthetic process, methylerythritol 4-phosphate pathway"/>
    <property type="evidence" value="ECO:0007669"/>
    <property type="project" value="TreeGrafter"/>
</dbReference>
<dbReference type="GO" id="GO:0016114">
    <property type="term" value="P:terpenoid biosynthetic process"/>
    <property type="evidence" value="ECO:0007669"/>
    <property type="project" value="UniProtKB-UniRule"/>
</dbReference>
<dbReference type="GO" id="GO:0009228">
    <property type="term" value="P:thiamine biosynthetic process"/>
    <property type="evidence" value="ECO:0007669"/>
    <property type="project" value="UniProtKB-UniRule"/>
</dbReference>
<dbReference type="CDD" id="cd02007">
    <property type="entry name" value="TPP_DXS"/>
    <property type="match status" value="1"/>
</dbReference>
<dbReference type="CDD" id="cd07033">
    <property type="entry name" value="TPP_PYR_DXS_TK_like"/>
    <property type="match status" value="1"/>
</dbReference>
<dbReference type="FunFam" id="3.40.50.920:FF:000002">
    <property type="entry name" value="1-deoxy-D-xylulose-5-phosphate synthase"/>
    <property type="match status" value="1"/>
</dbReference>
<dbReference type="FunFam" id="3.40.50.970:FF:000005">
    <property type="entry name" value="1-deoxy-D-xylulose-5-phosphate synthase"/>
    <property type="match status" value="1"/>
</dbReference>
<dbReference type="Gene3D" id="3.40.50.920">
    <property type="match status" value="1"/>
</dbReference>
<dbReference type="Gene3D" id="3.40.50.970">
    <property type="match status" value="2"/>
</dbReference>
<dbReference type="HAMAP" id="MF_00315">
    <property type="entry name" value="DXP_synth"/>
    <property type="match status" value="1"/>
</dbReference>
<dbReference type="InterPro" id="IPR005477">
    <property type="entry name" value="Dxylulose-5-P_synthase"/>
</dbReference>
<dbReference type="InterPro" id="IPR029061">
    <property type="entry name" value="THDP-binding"/>
</dbReference>
<dbReference type="InterPro" id="IPR009014">
    <property type="entry name" value="Transketo_C/PFOR_II"/>
</dbReference>
<dbReference type="InterPro" id="IPR005475">
    <property type="entry name" value="Transketolase-like_Pyr-bd"/>
</dbReference>
<dbReference type="InterPro" id="IPR020826">
    <property type="entry name" value="Transketolase_BS"/>
</dbReference>
<dbReference type="InterPro" id="IPR033248">
    <property type="entry name" value="Transketolase_C"/>
</dbReference>
<dbReference type="NCBIfam" id="TIGR00204">
    <property type="entry name" value="dxs"/>
    <property type="match status" value="1"/>
</dbReference>
<dbReference type="NCBIfam" id="NF003933">
    <property type="entry name" value="PRK05444.2-2"/>
    <property type="match status" value="1"/>
</dbReference>
<dbReference type="PANTHER" id="PTHR43322">
    <property type="entry name" value="1-D-DEOXYXYLULOSE 5-PHOSPHATE SYNTHASE-RELATED"/>
    <property type="match status" value="1"/>
</dbReference>
<dbReference type="PANTHER" id="PTHR43322:SF5">
    <property type="entry name" value="1-DEOXY-D-XYLULOSE-5-PHOSPHATE SYNTHASE, CHLOROPLASTIC"/>
    <property type="match status" value="1"/>
</dbReference>
<dbReference type="Pfam" id="PF13292">
    <property type="entry name" value="DXP_synthase_N"/>
    <property type="match status" value="1"/>
</dbReference>
<dbReference type="Pfam" id="PF02779">
    <property type="entry name" value="Transket_pyr"/>
    <property type="match status" value="1"/>
</dbReference>
<dbReference type="Pfam" id="PF02780">
    <property type="entry name" value="Transketolase_C"/>
    <property type="match status" value="1"/>
</dbReference>
<dbReference type="SMART" id="SM00861">
    <property type="entry name" value="Transket_pyr"/>
    <property type="match status" value="1"/>
</dbReference>
<dbReference type="SUPFAM" id="SSF52518">
    <property type="entry name" value="Thiamin diphosphate-binding fold (THDP-binding)"/>
    <property type="match status" value="2"/>
</dbReference>
<dbReference type="SUPFAM" id="SSF52922">
    <property type="entry name" value="TK C-terminal domain-like"/>
    <property type="match status" value="1"/>
</dbReference>
<dbReference type="PROSITE" id="PS00802">
    <property type="entry name" value="TRANSKETOLASE_2"/>
    <property type="match status" value="1"/>
</dbReference>
<keyword id="KW-0414">Isoprene biosynthesis</keyword>
<keyword id="KW-0460">Magnesium</keyword>
<keyword id="KW-0479">Metal-binding</keyword>
<keyword id="KW-0784">Thiamine biosynthesis</keyword>
<keyword id="KW-0786">Thiamine pyrophosphate</keyword>
<keyword id="KW-0808">Transferase</keyword>
<name>DXS_PSE14</name>
<proteinExistence type="inferred from homology"/>
<organism>
    <name type="scientific">Pseudomonas savastanoi pv. phaseolicola (strain 1448A / Race 6)</name>
    <name type="common">Pseudomonas syringae pv. phaseolicola (strain 1448A / Race 6)</name>
    <dbReference type="NCBI Taxonomy" id="264730"/>
    <lineage>
        <taxon>Bacteria</taxon>
        <taxon>Pseudomonadati</taxon>
        <taxon>Pseudomonadota</taxon>
        <taxon>Gammaproteobacteria</taxon>
        <taxon>Pseudomonadales</taxon>
        <taxon>Pseudomonadaceae</taxon>
        <taxon>Pseudomonas</taxon>
    </lineage>
</organism>
<gene>
    <name evidence="1" type="primary">dxs</name>
    <name type="ordered locus">PSPPH_0599</name>
</gene>
<feature type="chain" id="PRO_0000256458" description="1-deoxy-D-xylulose-5-phosphate synthase">
    <location>
        <begin position="1"/>
        <end position="630"/>
    </location>
</feature>
<feature type="binding site" evidence="1">
    <location>
        <position position="87"/>
    </location>
    <ligand>
        <name>thiamine diphosphate</name>
        <dbReference type="ChEBI" id="CHEBI:58937"/>
    </ligand>
</feature>
<feature type="binding site" evidence="1">
    <location>
        <begin position="128"/>
        <end position="130"/>
    </location>
    <ligand>
        <name>thiamine diphosphate</name>
        <dbReference type="ChEBI" id="CHEBI:58937"/>
    </ligand>
</feature>
<feature type="binding site" evidence="1">
    <location>
        <position position="159"/>
    </location>
    <ligand>
        <name>Mg(2+)</name>
        <dbReference type="ChEBI" id="CHEBI:18420"/>
    </ligand>
</feature>
<feature type="binding site" evidence="1">
    <location>
        <begin position="160"/>
        <end position="161"/>
    </location>
    <ligand>
        <name>thiamine diphosphate</name>
        <dbReference type="ChEBI" id="CHEBI:58937"/>
    </ligand>
</feature>
<feature type="binding site" evidence="1">
    <location>
        <position position="188"/>
    </location>
    <ligand>
        <name>Mg(2+)</name>
        <dbReference type="ChEBI" id="CHEBI:18420"/>
    </ligand>
</feature>
<feature type="binding site" evidence="1">
    <location>
        <position position="188"/>
    </location>
    <ligand>
        <name>thiamine diphosphate</name>
        <dbReference type="ChEBI" id="CHEBI:58937"/>
    </ligand>
</feature>
<feature type="binding site" evidence="1">
    <location>
        <position position="295"/>
    </location>
    <ligand>
        <name>thiamine diphosphate</name>
        <dbReference type="ChEBI" id="CHEBI:58937"/>
    </ligand>
</feature>
<feature type="binding site" evidence="1">
    <location>
        <position position="377"/>
    </location>
    <ligand>
        <name>thiamine diphosphate</name>
        <dbReference type="ChEBI" id="CHEBI:58937"/>
    </ligand>
</feature>
<protein>
    <recommendedName>
        <fullName evidence="1">1-deoxy-D-xylulose-5-phosphate synthase</fullName>
        <ecNumber evidence="1">2.2.1.7</ecNumber>
    </recommendedName>
    <alternativeName>
        <fullName evidence="1">1-deoxyxylulose-5-phosphate synthase</fullName>
        <shortName evidence="1">DXP synthase</shortName>
        <shortName evidence="1">DXPS</shortName>
    </alternativeName>
</protein>
<evidence type="ECO:0000255" key="1">
    <source>
        <dbReference type="HAMAP-Rule" id="MF_00315"/>
    </source>
</evidence>
<sequence length="630" mass="67844">MPTTFKEIPRERPVTPLLDRADTPHGLRRLGEAELETLADELRLELLYSVGQTGGHFGAGLGVIELTIALHYVFDTPDDRLVWDVGHQAYPHKILTGRRARMSTLRQKDGVAAFPRRSESEYDTFGVGHSSTSISAALGMAIASRLQGSERKSIAVIGDGALTAGMAFEALNHAPEVAANMLVILNDNDMSISRNVGGLSNYLAKILSSRTYSSMREGSKKVLSRLPGAWEIARRTEEYAKGMLVPGTLFEELGWNYIGPIDGHDLPTLIATLRNMRDLKGPQFLHVVTKKGKGFAPAEVDPIGYHAITKLEPLNAPAAPKKISAPKYSAVFGQWICDMAEADSRLVGITPAMKEGSDLVAFSERFPERYFDVAIAEQHAVTLAAGMACEGSKPVVAIYSTFLQRGYDQLVHDVAVQNLDVLFAIDRAGLVGEDGPTHAGSFDLSYLRCIPGMVVMTPSDENELRKLLNTGYLHTGPAAVRYPRGTGPDALIETGLDPVEIGKGVVRRQGQGVAILVFGVQLADALVVAEKLDATVIDMRFVKPLDEALVSEAAANHELLVTLEENAVMGGAGAAVSEFLARANILKSVLHLGLPDTYVEHAKPAQMLAECGLDAQGIEAAINERLALIG</sequence>